<comment type="function">
    <text evidence="5 7">Dehydrogenase that catalyzes the oxidation of several aminoaldehydes (PubMed:23408433). Metabolizes and detoxifies aldehyde products of polyamine degradation to non-toxic amino acids (Probable). Catalyzes the oxidation of 4-aminobutanal and 3-aminopropanal to 4-aminobutanoate and beta-alanine, respectively (PubMed:23408433). Catalyzes the oxidation of 4-(trimethylamino)butanal and 4-guanidinobutanal to 4-trimethylammoniobutanoate and 4-guanidinobutanoate, respectively (PubMed:23408433). Catalyzes the oxidation of betaine aldehyde to glycine betaine (PubMed:23408433).</text>
</comment>
<comment type="catalytic activity">
    <reaction evidence="5">
        <text>4-aminobutanal + NAD(+) + H2O = 4-aminobutanoate + NADH + 2 H(+)</text>
        <dbReference type="Rhea" id="RHEA:19105"/>
        <dbReference type="ChEBI" id="CHEBI:15377"/>
        <dbReference type="ChEBI" id="CHEBI:15378"/>
        <dbReference type="ChEBI" id="CHEBI:57540"/>
        <dbReference type="ChEBI" id="CHEBI:57945"/>
        <dbReference type="ChEBI" id="CHEBI:58264"/>
        <dbReference type="ChEBI" id="CHEBI:59888"/>
        <dbReference type="EC" id="1.2.1.19"/>
    </reaction>
    <physiologicalReaction direction="left-to-right" evidence="5">
        <dbReference type="Rhea" id="RHEA:19106"/>
    </physiologicalReaction>
</comment>
<comment type="catalytic activity">
    <reaction evidence="5">
        <text>3-aminopropanal + NAD(+) + H2O = beta-alanine + NADH + 2 H(+)</text>
        <dbReference type="Rhea" id="RHEA:30695"/>
        <dbReference type="ChEBI" id="CHEBI:15377"/>
        <dbReference type="ChEBI" id="CHEBI:15378"/>
        <dbReference type="ChEBI" id="CHEBI:57540"/>
        <dbReference type="ChEBI" id="CHEBI:57945"/>
        <dbReference type="ChEBI" id="CHEBI:57966"/>
        <dbReference type="ChEBI" id="CHEBI:58374"/>
    </reaction>
    <physiologicalReaction direction="left-to-right" evidence="5">
        <dbReference type="Rhea" id="RHEA:30696"/>
    </physiologicalReaction>
</comment>
<comment type="catalytic activity">
    <reaction evidence="5">
        <text>4-(trimethylamino)butanal + NAD(+) + H2O = 4-(trimethylamino)butanoate + NADH + 2 H(+)</text>
        <dbReference type="Rhea" id="RHEA:17985"/>
        <dbReference type="ChEBI" id="CHEBI:15377"/>
        <dbReference type="ChEBI" id="CHEBI:15378"/>
        <dbReference type="ChEBI" id="CHEBI:16244"/>
        <dbReference type="ChEBI" id="CHEBI:18020"/>
        <dbReference type="ChEBI" id="CHEBI:57540"/>
        <dbReference type="ChEBI" id="CHEBI:57945"/>
        <dbReference type="EC" id="1.2.1.47"/>
    </reaction>
    <physiologicalReaction direction="left-to-right" evidence="5">
        <dbReference type="Rhea" id="RHEA:17986"/>
    </physiologicalReaction>
</comment>
<comment type="catalytic activity">
    <reaction evidence="5">
        <text>4-guanidinobutanal + NAD(+) + H2O = 4-guanidinobutanoate + NADH + 2 H(+)</text>
        <dbReference type="Rhea" id="RHEA:14381"/>
        <dbReference type="ChEBI" id="CHEBI:15377"/>
        <dbReference type="ChEBI" id="CHEBI:15378"/>
        <dbReference type="ChEBI" id="CHEBI:57486"/>
        <dbReference type="ChEBI" id="CHEBI:57540"/>
        <dbReference type="ChEBI" id="CHEBI:57854"/>
        <dbReference type="ChEBI" id="CHEBI:57945"/>
        <dbReference type="EC" id="1.2.1.54"/>
    </reaction>
    <physiologicalReaction direction="left-to-right" evidence="5">
        <dbReference type="Rhea" id="RHEA:14382"/>
    </physiologicalReaction>
</comment>
<comment type="catalytic activity">
    <reaction evidence="5">
        <text>betaine aldehyde + NAD(+) + H2O = glycine betaine + NADH + 2 H(+)</text>
        <dbReference type="Rhea" id="RHEA:15305"/>
        <dbReference type="ChEBI" id="CHEBI:15377"/>
        <dbReference type="ChEBI" id="CHEBI:15378"/>
        <dbReference type="ChEBI" id="CHEBI:15710"/>
        <dbReference type="ChEBI" id="CHEBI:17750"/>
        <dbReference type="ChEBI" id="CHEBI:57540"/>
        <dbReference type="ChEBI" id="CHEBI:57945"/>
        <dbReference type="EC" id="1.2.1.8"/>
    </reaction>
    <physiologicalReaction direction="left-to-right" evidence="5">
        <dbReference type="Rhea" id="RHEA:15306"/>
    </physiologicalReaction>
</comment>
<comment type="biophysicochemical properties">
    <kinetics>
        <KM evidence="5">26 uM for 4-aminobutanal</KM>
        <KM evidence="5">11 uM for 3-aminopropanal</KM>
        <KM evidence="5">10 uM for 4-(trimethylamino)butanal</KM>
        <KM evidence="5">5 uM for 4-guanidinobutanal</KM>
        <KM evidence="5">29 uM for betaine aldehyde</KM>
        <KM evidence="5">79 uM for NAD(+) with 3-aminopropanal as substrate</KM>
    </kinetics>
</comment>
<comment type="pathway">
    <text evidence="7">Amine and polyamine biosynthesis; betaine biosynthesis via choline pathway; betaine from betaine aldehyde: step 1/1.</text>
</comment>
<comment type="similarity">
    <text evidence="7">Belongs to the aldehyde dehydrogenase family.</text>
</comment>
<evidence type="ECO:0000250" key="1">
    <source>
        <dbReference type="UniProtKB" id="C0P9J6"/>
    </source>
</evidence>
<evidence type="ECO:0000250" key="2">
    <source>
        <dbReference type="UniProtKB" id="P20000"/>
    </source>
</evidence>
<evidence type="ECO:0000255" key="3">
    <source>
        <dbReference type="PROSITE-ProRule" id="PRU10007"/>
    </source>
</evidence>
<evidence type="ECO:0000255" key="4">
    <source>
        <dbReference type="PROSITE-ProRule" id="PRU10008"/>
    </source>
</evidence>
<evidence type="ECO:0000269" key="5">
    <source>
    </source>
</evidence>
<evidence type="ECO:0000303" key="6">
    <source>
    </source>
</evidence>
<evidence type="ECO:0000305" key="7"/>
<evidence type="ECO:0000312" key="8">
    <source>
        <dbReference type="EMBL" id="ONM04709.1"/>
    </source>
</evidence>
<feature type="chain" id="PRO_0000454136" description="Aminoaldehyde dehydrogenase 1b">
    <location>
        <begin position="1"/>
        <end position="506"/>
    </location>
</feature>
<feature type="active site" description="Proton acceptor" evidence="3">
    <location>
        <position position="263"/>
    </location>
</feature>
<feature type="active site" description="Nucleophile" evidence="4">
    <location>
        <position position="297"/>
    </location>
</feature>
<feature type="binding site" evidence="1">
    <location>
        <position position="102"/>
    </location>
    <ligand>
        <name>Na(+)</name>
        <dbReference type="ChEBI" id="CHEBI:29101"/>
    </ligand>
</feature>
<feature type="binding site" evidence="1">
    <location>
        <begin position="162"/>
        <end position="164"/>
    </location>
    <ligand>
        <name>NAD(+)</name>
        <dbReference type="ChEBI" id="CHEBI:57540"/>
    </ligand>
</feature>
<feature type="binding site" evidence="1">
    <location>
        <begin position="188"/>
        <end position="191"/>
    </location>
    <ligand>
        <name>NAD(+)</name>
        <dbReference type="ChEBI" id="CHEBI:57540"/>
    </ligand>
</feature>
<feature type="binding site" evidence="1">
    <location>
        <position position="192"/>
    </location>
    <ligand>
        <name>Na(+)</name>
        <dbReference type="ChEBI" id="CHEBI:29101"/>
    </ligand>
</feature>
<feature type="binding site" evidence="1">
    <location>
        <begin position="242"/>
        <end position="245"/>
    </location>
    <ligand>
        <name>NAD(+)</name>
        <dbReference type="ChEBI" id="CHEBI:57540"/>
    </ligand>
</feature>
<feature type="binding site" evidence="1">
    <location>
        <position position="263"/>
    </location>
    <ligand>
        <name>NAD(+)</name>
        <dbReference type="ChEBI" id="CHEBI:57540"/>
    </ligand>
</feature>
<feature type="binding site" evidence="1">
    <location>
        <position position="396"/>
    </location>
    <ligand>
        <name>NAD(+)</name>
        <dbReference type="ChEBI" id="CHEBI:57540"/>
    </ligand>
</feature>
<feature type="binding site" evidence="1">
    <location>
        <position position="462"/>
    </location>
    <ligand>
        <name>NAD(+)</name>
        <dbReference type="ChEBI" id="CHEBI:57540"/>
    </ligand>
</feature>
<feature type="site" description="Transition state stabilizer" evidence="2">
    <location>
        <position position="165"/>
    </location>
</feature>
<feature type="sequence conflict" description="In Ref. 2; AAT70230." evidence="7" ref="2">
    <location>
        <position position="1"/>
    </location>
</feature>
<feature type="sequence conflict" description="In Ref. 2; AAT70230." evidence="7" ref="2">
    <original>EFNEK</original>
    <variation>KFNER</variation>
    <location>
        <begin position="312"/>
        <end position="316"/>
    </location>
</feature>
<name>ADH1B_MAIZE</name>
<accession>G5DDC2</accession>
<accession>A0A1D6KPH6</accession>
<accession>Q53CF4</accession>
<sequence length="506" mass="55080">MMASQAMVPLRQLFVDGEWRPPAQGRRLPVVNPTTEAHIGEIPAGTAEDVDAAVAAARAALKRNRGRDWARAPGAVRAKYLRAIAAKVIERKQELAKLEALDCGKPYDEAAWDMDDVAGCFEYFADQAEALDKRQNSPVSLPMETFKCHLRREPIGVVGLITPWNYPLLMATWKVAPALAAGCAAVLKPSELASVTCLELADICKEVGLPPGVLNIVTGLGPDAGAPLSAHPDVDKVAFTGSFETGKKIMAAAAPMVKPVTLELGGKSPIVVFDDVDIDKAVEWTLFGCFWTNGQICSATSRLLVHTKIAKEFNEKMVAWAKNIKVSDPLEEGCRLGPVVSEGQYEKIKKFILNAKSEGATILTGGVRPAHLEKGFFIEPTIITDITTSMEIWREEVFGPVLCVKEFSTEDEAIELANDTQYGLAGAVISGDRERCQRLSEEIDAGIIWVNCSQPCFCQAPWGGNKRSGFGRELGEGGIDNYLSVKQVTEYISDEPWGWYRSPSKL</sequence>
<keyword id="KW-0479">Metal-binding</keyword>
<keyword id="KW-0520">NAD</keyword>
<keyword id="KW-0560">Oxidoreductase</keyword>
<keyword id="KW-1185">Reference proteome</keyword>
<keyword id="KW-0915">Sodium</keyword>
<reference key="1">
    <citation type="journal article" date="2013" name="J. Biol. Chem.">
        <title>Plant ALDH10 family: identifying critical residues for substrate specificity and trapping a thiohemiacetal intermediate.</title>
        <authorList>
            <person name="Kopecny D."/>
            <person name="Koncitikova R."/>
            <person name="Tylichova M."/>
            <person name="Vigouroux A."/>
            <person name="Moskalikova H."/>
            <person name="Soural M."/>
            <person name="Sebela M."/>
            <person name="Morera S."/>
        </authorList>
    </citation>
    <scope>NUCLEOTIDE SEQUENCE [MRNA]</scope>
    <scope>FUNCTION</scope>
    <scope>CATALYTIC ACTIVITY</scope>
    <scope>BIOPHYSICOCHEMICAL PROPERTIES</scope>
    <source>
        <tissue>Meristem</tissue>
    </source>
</reference>
<reference key="2">
    <citation type="submission" date="2004-04" db="EMBL/GenBank/DDBJ databases">
        <title>Cloning and Sequencing of BADH Gene from Zea mays.</title>
        <authorList>
            <person name="Aili Y."/>
            <person name="Jingsheng X."/>
            <person name="Rukai C."/>
        </authorList>
    </citation>
    <scope>NUCLEOTIDE SEQUENCE [MRNA]</scope>
</reference>
<reference key="3">
    <citation type="journal article" date="2009" name="Science">
        <title>The B73 maize genome: complexity, diversity, and dynamics.</title>
        <authorList>
            <person name="Schnable P.S."/>
            <person name="Ware D."/>
            <person name="Fulton R.S."/>
            <person name="Stein J.C."/>
            <person name="Wei F."/>
            <person name="Pasternak S."/>
            <person name="Liang C."/>
            <person name="Zhang J."/>
            <person name="Fulton L."/>
            <person name="Graves T.A."/>
            <person name="Minx P."/>
            <person name="Reily A.D."/>
            <person name="Courtney L."/>
            <person name="Kruchowski S.S."/>
            <person name="Tomlinson C."/>
            <person name="Strong C."/>
            <person name="Delehaunty K."/>
            <person name="Fronick C."/>
            <person name="Courtney B."/>
            <person name="Rock S.M."/>
            <person name="Belter E."/>
            <person name="Du F."/>
            <person name="Kim K."/>
            <person name="Abbott R.M."/>
            <person name="Cotton M."/>
            <person name="Levy A."/>
            <person name="Marchetto P."/>
            <person name="Ochoa K."/>
            <person name="Jackson S.M."/>
            <person name="Gillam B."/>
            <person name="Chen W."/>
            <person name="Yan L."/>
            <person name="Higginbotham J."/>
            <person name="Cardenas M."/>
            <person name="Waligorski J."/>
            <person name="Applebaum E."/>
            <person name="Phelps L."/>
            <person name="Falcone J."/>
            <person name="Kanchi K."/>
            <person name="Thane T."/>
            <person name="Scimone A."/>
            <person name="Thane N."/>
            <person name="Henke J."/>
            <person name="Wang T."/>
            <person name="Ruppert J."/>
            <person name="Shah N."/>
            <person name="Rotter K."/>
            <person name="Hodges J."/>
            <person name="Ingenthron E."/>
            <person name="Cordes M."/>
            <person name="Kohlberg S."/>
            <person name="Sgro J."/>
            <person name="Delgado B."/>
            <person name="Mead K."/>
            <person name="Chinwalla A."/>
            <person name="Leonard S."/>
            <person name="Crouse K."/>
            <person name="Collura K."/>
            <person name="Kudrna D."/>
            <person name="Currie J."/>
            <person name="He R."/>
            <person name="Angelova A."/>
            <person name="Rajasekar S."/>
            <person name="Mueller T."/>
            <person name="Lomeli R."/>
            <person name="Scara G."/>
            <person name="Ko A."/>
            <person name="Delaney K."/>
            <person name="Wissotski M."/>
            <person name="Lopez G."/>
            <person name="Campos D."/>
            <person name="Braidotti M."/>
            <person name="Ashley E."/>
            <person name="Golser W."/>
            <person name="Kim H."/>
            <person name="Lee S."/>
            <person name="Lin J."/>
            <person name="Dujmic Z."/>
            <person name="Kim W."/>
            <person name="Talag J."/>
            <person name="Zuccolo A."/>
            <person name="Fan C."/>
            <person name="Sebastian A."/>
            <person name="Kramer M."/>
            <person name="Spiegel L."/>
            <person name="Nascimento L."/>
            <person name="Zutavern T."/>
            <person name="Miller B."/>
            <person name="Ambroise C."/>
            <person name="Muller S."/>
            <person name="Spooner W."/>
            <person name="Narechania A."/>
            <person name="Ren L."/>
            <person name="Wei S."/>
            <person name="Kumari S."/>
            <person name="Faga B."/>
            <person name="Levy M.J."/>
            <person name="McMahan L."/>
            <person name="Van Buren P."/>
            <person name="Vaughn M.W."/>
            <person name="Ying K."/>
            <person name="Yeh C.-T."/>
            <person name="Emrich S.J."/>
            <person name="Jia Y."/>
            <person name="Kalyanaraman A."/>
            <person name="Hsia A.-P."/>
            <person name="Barbazuk W.B."/>
            <person name="Baucom R.S."/>
            <person name="Brutnell T.P."/>
            <person name="Carpita N.C."/>
            <person name="Chaparro C."/>
            <person name="Chia J.-M."/>
            <person name="Deragon J.-M."/>
            <person name="Estill J.C."/>
            <person name="Fu Y."/>
            <person name="Jeddeloh J.A."/>
            <person name="Han Y."/>
            <person name="Lee H."/>
            <person name="Li P."/>
            <person name="Lisch D.R."/>
            <person name="Liu S."/>
            <person name="Liu Z."/>
            <person name="Nagel D.H."/>
            <person name="McCann M.C."/>
            <person name="SanMiguel P."/>
            <person name="Myers A.M."/>
            <person name="Nettleton D."/>
            <person name="Nguyen J."/>
            <person name="Penning B.W."/>
            <person name="Ponnala L."/>
            <person name="Schneider K.L."/>
            <person name="Schwartz D.C."/>
            <person name="Sharma A."/>
            <person name="Soderlund C."/>
            <person name="Springer N.M."/>
            <person name="Sun Q."/>
            <person name="Wang H."/>
            <person name="Waterman M."/>
            <person name="Westerman R."/>
            <person name="Wolfgruber T.K."/>
            <person name="Yang L."/>
            <person name="Yu Y."/>
            <person name="Zhang L."/>
            <person name="Zhou S."/>
            <person name="Zhu Q."/>
            <person name="Bennetzen J.L."/>
            <person name="Dawe R.K."/>
            <person name="Jiang J."/>
            <person name="Jiang N."/>
            <person name="Presting G.G."/>
            <person name="Wessler S.R."/>
            <person name="Aluru S."/>
            <person name="Martienssen R.A."/>
            <person name="Clifton S.W."/>
            <person name="McCombie W.R."/>
            <person name="Wing R.A."/>
            <person name="Wilson R.K."/>
        </authorList>
    </citation>
    <scope>NUCLEOTIDE SEQUENCE [LARGE SCALE GENOMIC DNA]</scope>
    <source>
        <strain>cv. B73</strain>
    </source>
</reference>
<gene>
    <name evidence="6" type="primary">AMADH1B</name>
    <name evidence="6" type="synonym">ALDH10A9</name>
    <name evidence="8" type="ORF">ZEAMMB73_Zm00001d032257</name>
</gene>
<proteinExistence type="evidence at protein level"/>
<organism>
    <name type="scientific">Zea mays</name>
    <name type="common">Maize</name>
    <dbReference type="NCBI Taxonomy" id="4577"/>
    <lineage>
        <taxon>Eukaryota</taxon>
        <taxon>Viridiplantae</taxon>
        <taxon>Streptophyta</taxon>
        <taxon>Embryophyta</taxon>
        <taxon>Tracheophyta</taxon>
        <taxon>Spermatophyta</taxon>
        <taxon>Magnoliopsida</taxon>
        <taxon>Liliopsida</taxon>
        <taxon>Poales</taxon>
        <taxon>Poaceae</taxon>
        <taxon>PACMAD clade</taxon>
        <taxon>Panicoideae</taxon>
        <taxon>Andropogonodae</taxon>
        <taxon>Andropogoneae</taxon>
        <taxon>Tripsacinae</taxon>
        <taxon>Zea</taxon>
    </lineage>
</organism>
<protein>
    <recommendedName>
        <fullName evidence="6">Aminoaldehyde dehydrogenase 1b</fullName>
        <shortName evidence="6">ZmAMADH1b</shortName>
        <ecNumber evidence="5">1.2.1.-</ecNumber>
    </recommendedName>
    <alternativeName>
        <fullName evidence="7">4-trimethylammoniobutyraldehyde dehydrogenase AMADH1b</fullName>
        <ecNumber evidence="5">1.2.1.47</ecNumber>
    </alternativeName>
    <alternativeName>
        <fullName evidence="7">Aminobutyraldehyde dehydrogenase AMADH1b</fullName>
        <ecNumber evidence="5">1.2.1.19</ecNumber>
    </alternativeName>
    <alternativeName>
        <fullName evidence="7">Betaine aldehyde dehydrogenase AMADH1b</fullName>
        <ecNumber evidence="5">1.2.1.8</ecNumber>
    </alternativeName>
    <alternativeName>
        <fullName evidence="7">Gamma-guanidinobutyraldehyde dehydrogenase AMADH1b</fullName>
        <ecNumber evidence="5">1.2.1.54</ecNumber>
    </alternativeName>
</protein>
<dbReference type="EC" id="1.2.1.-" evidence="5"/>
<dbReference type="EC" id="1.2.1.47" evidence="5"/>
<dbReference type="EC" id="1.2.1.19" evidence="5"/>
<dbReference type="EC" id="1.2.1.8" evidence="5"/>
<dbReference type="EC" id="1.2.1.54" evidence="5"/>
<dbReference type="EMBL" id="JN635700">
    <property type="protein sequence ID" value="AEP68091.1"/>
    <property type="molecule type" value="mRNA"/>
</dbReference>
<dbReference type="EMBL" id="AY587278">
    <property type="protein sequence ID" value="AAT70230.1"/>
    <property type="molecule type" value="mRNA"/>
</dbReference>
<dbReference type="EMBL" id="CM007647">
    <property type="protein sequence ID" value="ONM04709.1"/>
    <property type="molecule type" value="Genomic_DNA"/>
</dbReference>
<dbReference type="RefSeq" id="NP_001105781.1">
    <property type="nucleotide sequence ID" value="NM_001112311.1"/>
</dbReference>
<dbReference type="SMR" id="G5DDC2"/>
<dbReference type="FunCoup" id="G5DDC2">
    <property type="interactions" value="673"/>
</dbReference>
<dbReference type="IntAct" id="G5DDC2">
    <property type="interactions" value="3"/>
</dbReference>
<dbReference type="STRING" id="4577.A0A1D6KPH6"/>
<dbReference type="PaxDb" id="4577-GRMZM2G016189_P02"/>
<dbReference type="GeneID" id="606443"/>
<dbReference type="KEGG" id="zma:606443"/>
<dbReference type="eggNOG" id="KOG2450">
    <property type="taxonomic scope" value="Eukaryota"/>
</dbReference>
<dbReference type="InParanoid" id="G5DDC2"/>
<dbReference type="OMA" id="PMPIAAW"/>
<dbReference type="OrthoDB" id="310895at2759"/>
<dbReference type="BRENDA" id="1.2.1.19">
    <property type="organism ID" value="6752"/>
</dbReference>
<dbReference type="BRENDA" id="1.2.1.8">
    <property type="organism ID" value="6752"/>
</dbReference>
<dbReference type="UniPathway" id="UPA00529">
    <property type="reaction ID" value="UER00386"/>
</dbReference>
<dbReference type="Proteomes" id="UP000007305">
    <property type="component" value="Unplaced"/>
</dbReference>
<dbReference type="GO" id="GO:0102244">
    <property type="term" value="F:3-aminopropanal dehydrogenase (NAD+) activity"/>
    <property type="evidence" value="ECO:0007669"/>
    <property type="project" value="RHEA"/>
</dbReference>
<dbReference type="GO" id="GO:0047105">
    <property type="term" value="F:4-trimethylammoniobutyraldehyde dehydrogenase activity"/>
    <property type="evidence" value="ECO:0000314"/>
    <property type="project" value="UniProtKB"/>
</dbReference>
<dbReference type="GO" id="GO:0019145">
    <property type="term" value="F:aminobutyraldehyde dehydrogenase (NAD+) activity"/>
    <property type="evidence" value="ECO:0000314"/>
    <property type="project" value="UniProtKB"/>
</dbReference>
<dbReference type="GO" id="GO:0008802">
    <property type="term" value="F:betaine-aldehyde dehydrogenase (NAD+) activity"/>
    <property type="evidence" value="ECO:0000314"/>
    <property type="project" value="UniProtKB"/>
</dbReference>
<dbReference type="GO" id="GO:0047107">
    <property type="term" value="F:gamma-guanidinobutyraldehyde dehydrogenase (NAD+) activity"/>
    <property type="evidence" value="ECO:0000314"/>
    <property type="project" value="UniProtKB"/>
</dbReference>
<dbReference type="GO" id="GO:0042803">
    <property type="term" value="F:protein homodimerization activity"/>
    <property type="evidence" value="ECO:0000250"/>
    <property type="project" value="UniProtKB"/>
</dbReference>
<dbReference type="GO" id="GO:0031402">
    <property type="term" value="F:sodium ion binding"/>
    <property type="evidence" value="ECO:0000250"/>
    <property type="project" value="UniProtKB"/>
</dbReference>
<dbReference type="GO" id="GO:0110095">
    <property type="term" value="P:cellular detoxification of aldehyde"/>
    <property type="evidence" value="ECO:0000314"/>
    <property type="project" value="UniProtKB"/>
</dbReference>
<dbReference type="GO" id="GO:0019285">
    <property type="term" value="P:glycine betaine biosynthetic process from choline"/>
    <property type="evidence" value="ECO:0007669"/>
    <property type="project" value="UniProtKB-UniPathway"/>
</dbReference>
<dbReference type="CDD" id="cd07110">
    <property type="entry name" value="ALDH_F10_BADH"/>
    <property type="match status" value="1"/>
</dbReference>
<dbReference type="FunFam" id="3.40.309.10:FF:000012">
    <property type="entry name" value="Betaine aldehyde dehydrogenase"/>
    <property type="match status" value="1"/>
</dbReference>
<dbReference type="FunFam" id="3.40.605.10:FF:000007">
    <property type="entry name" value="NAD/NADP-dependent betaine aldehyde dehydrogenase"/>
    <property type="match status" value="1"/>
</dbReference>
<dbReference type="Gene3D" id="3.40.605.10">
    <property type="entry name" value="Aldehyde Dehydrogenase, Chain A, domain 1"/>
    <property type="match status" value="1"/>
</dbReference>
<dbReference type="Gene3D" id="3.40.309.10">
    <property type="entry name" value="Aldehyde Dehydrogenase, Chain A, domain 2"/>
    <property type="match status" value="1"/>
</dbReference>
<dbReference type="InterPro" id="IPR016161">
    <property type="entry name" value="Ald_DH/histidinol_DH"/>
</dbReference>
<dbReference type="InterPro" id="IPR016163">
    <property type="entry name" value="Ald_DH_C"/>
</dbReference>
<dbReference type="InterPro" id="IPR016160">
    <property type="entry name" value="Ald_DH_CS_CYS"/>
</dbReference>
<dbReference type="InterPro" id="IPR029510">
    <property type="entry name" value="Ald_DH_CS_GLU"/>
</dbReference>
<dbReference type="InterPro" id="IPR016162">
    <property type="entry name" value="Ald_DH_N"/>
</dbReference>
<dbReference type="InterPro" id="IPR015590">
    <property type="entry name" value="Aldehyde_DH_dom"/>
</dbReference>
<dbReference type="PANTHER" id="PTHR43860">
    <property type="entry name" value="BETAINE ALDEHYDE DEHYDROGENASE"/>
    <property type="match status" value="1"/>
</dbReference>
<dbReference type="PANTHER" id="PTHR43860:SF2">
    <property type="entry name" value="BETAINE ALDEHYDE DEHYDROGENASE-RELATED"/>
    <property type="match status" value="1"/>
</dbReference>
<dbReference type="Pfam" id="PF00171">
    <property type="entry name" value="Aldedh"/>
    <property type="match status" value="1"/>
</dbReference>
<dbReference type="SUPFAM" id="SSF53720">
    <property type="entry name" value="ALDH-like"/>
    <property type="match status" value="1"/>
</dbReference>
<dbReference type="PROSITE" id="PS00070">
    <property type="entry name" value="ALDEHYDE_DEHYDR_CYS"/>
    <property type="match status" value="1"/>
</dbReference>
<dbReference type="PROSITE" id="PS00687">
    <property type="entry name" value="ALDEHYDE_DEHYDR_GLU"/>
    <property type="match status" value="1"/>
</dbReference>